<organism>
    <name type="scientific">Crocosmia x crocosmiiflora</name>
    <name type="common">Montbretia</name>
    <name type="synonym">Crocosmia aurea x Crocosmia pottsii</name>
    <dbReference type="NCBI Taxonomy" id="1053288"/>
    <lineage>
        <taxon>Eukaryota</taxon>
        <taxon>Viridiplantae</taxon>
        <taxon>Streptophyta</taxon>
        <taxon>Embryophyta</taxon>
        <taxon>Tracheophyta</taxon>
        <taxon>Spermatophyta</taxon>
        <taxon>Magnoliopsida</taxon>
        <taxon>Liliopsida</taxon>
        <taxon>Asparagales</taxon>
        <taxon>Iridaceae</taxon>
        <taxon>Crocoideae</taxon>
        <taxon>Freesieae</taxon>
        <taxon>Crocosmia</taxon>
    </lineage>
</organism>
<keyword id="KW-0010">Activator</keyword>
<keyword id="KW-0238">DNA-binding</keyword>
<keyword id="KW-0539">Nucleus</keyword>
<keyword id="KW-0677">Repeat</keyword>
<keyword id="KW-0804">Transcription</keyword>
<keyword id="KW-0805">Transcription regulation</keyword>
<sequence>MVKRSQRVEKKAVEVNRGTWTAEEDEKLMNYVSAHGDKKWRMLPAKAGLKRCGKSCRLRWLNYLRPGIKRGNISEDEEDLIIRLHNLLGNRWSIIAGRIPGRTDNEIKNHWNTHLSKRSLTIEDLNKKHNPGIDNIDILPPTKITLTSSSDTFPVTPVCQTDQASDTNKNDVLVDSWTDLSGPDFDLEQFLSLLPMSDLCPGSNGNELEFDDFGIPRHDSKQDSFRSNDYNINYQECLDSQVWSCAFEYDDLDQFLDCQS</sequence>
<evidence type="ECO:0000255" key="1">
    <source>
        <dbReference type="PROSITE-ProRule" id="PRU00625"/>
    </source>
</evidence>
<evidence type="ECO:0000269" key="2">
    <source>
    </source>
</evidence>
<evidence type="ECO:0000303" key="3">
    <source>
    </source>
</evidence>
<evidence type="ECO:0000305" key="4"/>
<comment type="function">
    <text evidence="2">Transcription activator involved in the spatiotemporal regulation of flavonoid biosynthesis specifically in the corms of Montbretia (PubMed:31004005). Activates the promoters of enzymes involved in the biosynthesis of the flavonol myricetin and the flavonol-glycoside montbretin A (MbA) (PubMed:31004005). MbA is a potent inhibitor of human pancreatic alpha-amylase and is being developed as drug candidate to treat type-2 diabetes (PubMed:31004005).</text>
</comment>
<comment type="subcellular location">
    <subcellularLocation>
        <location evidence="1">Nucleus</location>
    </subcellularLocation>
</comment>
<name>MYB4_CROXC</name>
<dbReference type="EMBL" id="MK562528">
    <property type="protein sequence ID" value="QCF41223.1"/>
    <property type="molecule type" value="mRNA"/>
</dbReference>
<dbReference type="SMR" id="A0A4D6Q5I0"/>
<dbReference type="GO" id="GO:0005634">
    <property type="term" value="C:nucleus"/>
    <property type="evidence" value="ECO:0007669"/>
    <property type="project" value="UniProtKB-SubCell"/>
</dbReference>
<dbReference type="GO" id="GO:0003677">
    <property type="term" value="F:DNA binding"/>
    <property type="evidence" value="ECO:0007669"/>
    <property type="project" value="UniProtKB-KW"/>
</dbReference>
<dbReference type="CDD" id="cd00167">
    <property type="entry name" value="SANT"/>
    <property type="match status" value="2"/>
</dbReference>
<dbReference type="FunFam" id="1.10.10.60:FF:000001">
    <property type="entry name" value="MYB-related transcription factor"/>
    <property type="match status" value="1"/>
</dbReference>
<dbReference type="Gene3D" id="1.10.10.60">
    <property type="entry name" value="Homeodomain-like"/>
    <property type="match status" value="2"/>
</dbReference>
<dbReference type="InterPro" id="IPR009057">
    <property type="entry name" value="Homeodomain-like_sf"/>
</dbReference>
<dbReference type="InterPro" id="IPR017930">
    <property type="entry name" value="Myb_dom"/>
</dbReference>
<dbReference type="InterPro" id="IPR015495">
    <property type="entry name" value="Myb_TF_plants"/>
</dbReference>
<dbReference type="InterPro" id="IPR001005">
    <property type="entry name" value="SANT/Myb"/>
</dbReference>
<dbReference type="PANTHER" id="PTHR47999:SF107">
    <property type="entry name" value="TRANSCRIPTION FACTOR MYB114-LIKE"/>
    <property type="match status" value="1"/>
</dbReference>
<dbReference type="PANTHER" id="PTHR47999">
    <property type="entry name" value="TRANSCRIPTION FACTOR MYB8-RELATED-RELATED"/>
    <property type="match status" value="1"/>
</dbReference>
<dbReference type="Pfam" id="PF00249">
    <property type="entry name" value="Myb_DNA-binding"/>
    <property type="match status" value="2"/>
</dbReference>
<dbReference type="SMART" id="SM00717">
    <property type="entry name" value="SANT"/>
    <property type="match status" value="2"/>
</dbReference>
<dbReference type="SUPFAM" id="SSF46689">
    <property type="entry name" value="Homeodomain-like"/>
    <property type="match status" value="1"/>
</dbReference>
<dbReference type="PROSITE" id="PS51294">
    <property type="entry name" value="HTH_MYB"/>
    <property type="match status" value="2"/>
</dbReference>
<proteinExistence type="evidence at transcript level"/>
<gene>
    <name evidence="3" type="primary">MYB4</name>
</gene>
<feature type="chain" id="PRO_0000448216" description="Transcription factor MYB4">
    <location>
        <begin position="1"/>
        <end position="260"/>
    </location>
</feature>
<feature type="domain" description="HTH myb-type 1" evidence="1">
    <location>
        <begin position="12"/>
        <end position="64"/>
    </location>
</feature>
<feature type="domain" description="HTH myb-type 2" evidence="1">
    <location>
        <begin position="65"/>
        <end position="119"/>
    </location>
</feature>
<feature type="DNA-binding region" description="H-T-H motif" evidence="1">
    <location>
        <begin position="40"/>
        <end position="64"/>
    </location>
</feature>
<feature type="DNA-binding region" description="H-T-H motif" evidence="1">
    <location>
        <begin position="92"/>
        <end position="115"/>
    </location>
</feature>
<reference key="1">
    <citation type="journal article" date="2019" name="Plant Physiol.">
        <title>Flavonol biosynthesis genes and their use in engineering the plant antidiabetic metabolite montbretin A.</title>
        <authorList>
            <person name="Irmisch S."/>
            <person name="Ruebsam H."/>
            <person name="Jancsik S."/>
            <person name="Man Saint Yuen M."/>
            <person name="Madilao L.L."/>
            <person name="Bohlmann J."/>
        </authorList>
    </citation>
    <scope>NUCLEOTIDE SEQUENCE [MRNA]</scope>
    <scope>FUNCTION</scope>
</reference>
<accession>A0A4D6Q5I0</accession>
<protein>
    <recommendedName>
        <fullName evidence="4">Transcription factor MYB4</fullName>
    </recommendedName>
    <alternativeName>
        <fullName evidence="3">Myb-related protein 4</fullName>
        <shortName evidence="3">CcMYB4</shortName>
    </alternativeName>
</protein>